<keyword id="KW-0167">Capsid protein</keyword>
<keyword id="KW-1048">Host nucleus</keyword>
<keyword id="KW-1185">Reference proteome</keyword>
<keyword id="KW-0946">Virion</keyword>
<organism>
    <name type="scientific">Saimiriine herpesvirus 2 (strain 11)</name>
    <name type="common">SaHV-2</name>
    <name type="synonym">Herpesvirus saimiri</name>
    <dbReference type="NCBI Taxonomy" id="10383"/>
    <lineage>
        <taxon>Viruses</taxon>
        <taxon>Duplodnaviria</taxon>
        <taxon>Heunggongvirae</taxon>
        <taxon>Peploviricota</taxon>
        <taxon>Herviviricetes</taxon>
        <taxon>Herpesvirales</taxon>
        <taxon>Orthoherpesviridae</taxon>
        <taxon>Gammaherpesvirinae</taxon>
        <taxon>Rhadinovirus</taxon>
        <taxon>Rhadinovirus saimiriinegamma2</taxon>
        <taxon>Saimiriine herpesvirus 2</taxon>
    </lineage>
</organism>
<organismHost>
    <name type="scientific">Saimiri sciureus</name>
    <name type="common">Common squirrel monkey</name>
    <dbReference type="NCBI Taxonomy" id="9521"/>
</organismHost>
<sequence>MPKVNENSFKKIEKDVLKLLPPRPHKIEISEGQKFAKSIRQALSKYVTSVNHPIDFFSNQMLDVPFRQPLYADFLIQAKTIHQKEPIGSFLFTFKQEDSGSSIDIIFSPVSFYKISGLDAEFAPSVHRISFVWYGADNCIEDTVPNLAELIEEGKFHQFLTPVGPLVENITSTFVTRIKSVVKGEVLNNKSPPENVKLLLPSDLFIDLDEPNIDTLAPKHLLSFYYACVTYPVLHNVPVMALTFIKSNKSIRDLFCHLKVIYSDIIRTKYIAMQNDFYINKMSFGALCKLGSSSSETVPRRGNYHFRGSSLPTVEVPDFVADPGPWMTIL</sequence>
<protein>
    <recommendedName>
        <fullName evidence="1">Triplex capsid protein 1</fullName>
    </recommendedName>
</protein>
<accession>Q01051</accession>
<comment type="function">
    <text evidence="1">Structural component of the T=16 icosahedral capsid. The capsid is composed of pentamers and hexamers of major capsid protein/MCP, which are linked together by heterotrimers called triplexes. These triplexes are formed by a single molecule of triplex protein 1/TRX1 and two copies of triplex protein 2/TRX2. Additionally, TRX1 is required for efficient transport of TRX2 to the nucleus, which is the site of capsid assembly.</text>
</comment>
<comment type="subunit">
    <text evidence="1">Interacts with TRX2, MCP and capsid vertex component 2/CVC2.</text>
</comment>
<comment type="subcellular location">
    <subcellularLocation>
        <location evidence="1">Virion</location>
    </subcellularLocation>
    <subcellularLocation>
        <location evidence="1">Host nucleus</location>
    </subcellularLocation>
</comment>
<comment type="similarity">
    <text evidence="1">Belongs to the herpesviridae TRX1 protein family.</text>
</comment>
<gene>
    <name evidence="1" type="primary">TRX1</name>
    <name type="ordered locus">62</name>
</gene>
<feature type="chain" id="PRO_0000115722" description="Triplex capsid protein 1">
    <location>
        <begin position="1"/>
        <end position="330"/>
    </location>
</feature>
<proteinExistence type="inferred from homology"/>
<dbReference type="EMBL" id="X64346">
    <property type="protein sequence ID" value="CAA45685.1"/>
    <property type="molecule type" value="Genomic_DNA"/>
</dbReference>
<dbReference type="EMBL" id="M86409">
    <property type="protein sequence ID" value="AAA46138.1"/>
    <property type="molecule type" value="Genomic_DNA"/>
</dbReference>
<dbReference type="RefSeq" id="NP_040264.1">
    <property type="nucleotide sequence ID" value="NC_001350.1"/>
</dbReference>
<dbReference type="SMR" id="Q01051"/>
<dbReference type="KEGG" id="vg:1682461"/>
<dbReference type="Proteomes" id="UP000000587">
    <property type="component" value="Segment"/>
</dbReference>
<dbReference type="GO" id="GO:0042025">
    <property type="term" value="C:host cell nucleus"/>
    <property type="evidence" value="ECO:0007669"/>
    <property type="project" value="UniProtKB-SubCell"/>
</dbReference>
<dbReference type="GO" id="GO:0019028">
    <property type="term" value="C:viral capsid"/>
    <property type="evidence" value="ECO:0007669"/>
    <property type="project" value="UniProtKB-KW"/>
</dbReference>
<dbReference type="GO" id="GO:0003677">
    <property type="term" value="F:DNA binding"/>
    <property type="evidence" value="ECO:0007669"/>
    <property type="project" value="InterPro"/>
</dbReference>
<dbReference type="GO" id="GO:0019069">
    <property type="term" value="P:viral capsid assembly"/>
    <property type="evidence" value="ECO:0007669"/>
    <property type="project" value="InterPro"/>
</dbReference>
<dbReference type="HAMAP" id="MF_04018">
    <property type="entry name" value="HSV_TRX1"/>
    <property type="match status" value="1"/>
</dbReference>
<dbReference type="InterPro" id="IPR004999">
    <property type="entry name" value="Herpes_1"/>
</dbReference>
<dbReference type="Pfam" id="PF03327">
    <property type="entry name" value="Herpes_VP19C"/>
    <property type="match status" value="1"/>
</dbReference>
<name>TRX1_SHV21</name>
<reference key="1">
    <citation type="journal article" date="1992" name="J. Virol.">
        <title>Primary structure of the herpesvirus saimiri genome.</title>
        <authorList>
            <person name="Albrecht J.-C."/>
            <person name="Nicholas J."/>
            <person name="Biller D."/>
            <person name="Cameron K.R."/>
            <person name="Biesinger B."/>
            <person name="Newman C."/>
            <person name="Wittmann S."/>
            <person name="Craxton M.A."/>
            <person name="Coleman H."/>
            <person name="Fleckenstein B."/>
            <person name="Honess R.W."/>
        </authorList>
    </citation>
    <scope>NUCLEOTIDE SEQUENCE [LARGE SCALE GENOMIC DNA]</scope>
</reference>
<reference key="2">
    <citation type="journal article" date="1992" name="Virology">
        <title>Analysis of nucleotide sequence of the rightmost 43 kbp of herpesvirus saimiri (HVS) L-DNA: general conservation of genetic organization between HVS and Epstein-Barr virus.</title>
        <authorList>
            <person name="Nicholas J."/>
            <person name="Cameron K.R."/>
            <person name="Coleman H."/>
            <person name="Newman C."/>
            <person name="Honess R.W."/>
        </authorList>
    </citation>
    <scope>NUCLEOTIDE SEQUENCE [GENOMIC DNA]</scope>
</reference>
<evidence type="ECO:0000255" key="1">
    <source>
        <dbReference type="HAMAP-Rule" id="MF_04018"/>
    </source>
</evidence>